<comment type="similarity">
    <text evidence="1">Belongs to the UPF0173 family.</text>
</comment>
<accession>Q72J62</accession>
<organism>
    <name type="scientific">Thermus thermophilus (strain ATCC BAA-163 / DSM 7039 / HB27)</name>
    <dbReference type="NCBI Taxonomy" id="262724"/>
    <lineage>
        <taxon>Bacteria</taxon>
        <taxon>Thermotogati</taxon>
        <taxon>Deinococcota</taxon>
        <taxon>Deinococci</taxon>
        <taxon>Thermales</taxon>
        <taxon>Thermaceae</taxon>
        <taxon>Thermus</taxon>
    </lineage>
</organism>
<protein>
    <recommendedName>
        <fullName evidence="1">UPF0173 metal-dependent hydrolase TT_C0917</fullName>
    </recommendedName>
</protein>
<name>Y917_THET2</name>
<keyword id="KW-0378">Hydrolase</keyword>
<dbReference type="EMBL" id="AE017221">
    <property type="protein sequence ID" value="AAS81261.1"/>
    <property type="molecule type" value="Genomic_DNA"/>
</dbReference>
<dbReference type="RefSeq" id="WP_011173343.1">
    <property type="nucleotide sequence ID" value="NC_005835.1"/>
</dbReference>
<dbReference type="SMR" id="Q72J62"/>
<dbReference type="GeneID" id="3169078"/>
<dbReference type="KEGG" id="tth:TT_C0917"/>
<dbReference type="eggNOG" id="COG2220">
    <property type="taxonomic scope" value="Bacteria"/>
</dbReference>
<dbReference type="HOGENOM" id="CLU_070010_4_0_0"/>
<dbReference type="OrthoDB" id="9789133at2"/>
<dbReference type="Proteomes" id="UP000000592">
    <property type="component" value="Chromosome"/>
</dbReference>
<dbReference type="GO" id="GO:0016787">
    <property type="term" value="F:hydrolase activity"/>
    <property type="evidence" value="ECO:0007669"/>
    <property type="project" value="UniProtKB-UniRule"/>
</dbReference>
<dbReference type="Gene3D" id="3.60.15.10">
    <property type="entry name" value="Ribonuclease Z/Hydroxyacylglutathione hydrolase-like"/>
    <property type="match status" value="1"/>
</dbReference>
<dbReference type="HAMAP" id="MF_00457">
    <property type="entry name" value="UPF0173"/>
    <property type="match status" value="1"/>
</dbReference>
<dbReference type="InterPro" id="IPR001279">
    <property type="entry name" value="Metallo-B-lactamas"/>
</dbReference>
<dbReference type="InterPro" id="IPR036866">
    <property type="entry name" value="RibonucZ/Hydroxyglut_hydro"/>
</dbReference>
<dbReference type="InterPro" id="IPR022877">
    <property type="entry name" value="UPF0173"/>
</dbReference>
<dbReference type="InterPro" id="IPR050114">
    <property type="entry name" value="UPF0173_UPF0282_UlaG_hydrolase"/>
</dbReference>
<dbReference type="NCBIfam" id="NF001911">
    <property type="entry name" value="PRK00685.1"/>
    <property type="match status" value="1"/>
</dbReference>
<dbReference type="PANTHER" id="PTHR43546:SF3">
    <property type="entry name" value="UPF0173 METAL-DEPENDENT HYDROLASE MJ1163"/>
    <property type="match status" value="1"/>
</dbReference>
<dbReference type="PANTHER" id="PTHR43546">
    <property type="entry name" value="UPF0173 METAL-DEPENDENT HYDROLASE MJ1163-RELATED"/>
    <property type="match status" value="1"/>
</dbReference>
<dbReference type="Pfam" id="PF12706">
    <property type="entry name" value="Lactamase_B_2"/>
    <property type="match status" value="1"/>
</dbReference>
<dbReference type="SMART" id="SM00849">
    <property type="entry name" value="Lactamase_B"/>
    <property type="match status" value="1"/>
</dbReference>
<dbReference type="SUPFAM" id="SSF56281">
    <property type="entry name" value="Metallo-hydrolase/oxidoreductase"/>
    <property type="match status" value="1"/>
</dbReference>
<proteinExistence type="inferred from homology"/>
<evidence type="ECO:0000255" key="1">
    <source>
        <dbReference type="HAMAP-Rule" id="MF_00457"/>
    </source>
</evidence>
<feature type="chain" id="PRO_0000156389" description="UPF0173 metal-dependent hydrolase TT_C0917">
    <location>
        <begin position="1"/>
        <end position="224"/>
    </location>
</feature>
<gene>
    <name type="ordered locus">TT_C0917</name>
</gene>
<sequence>MVEVRYLGHSAVLLTDGKTRIVIDPFLTGNPMAALGVGEVQADLILVTHAHGDHFGDSVALSKKGGVVVSTFEIATYAEKHGAKSVPMNLGGTYRFEGGWLKWVPAWHSSSFPDGTYGGMPMGVVVELGGKRIYHAGDTALFSDMRLIGEMGLDLALLPIGDHFTMGPEDALKALELLRPKKVVPIHYNTFPPIRQDGEAFAQRAREKGVEGHALKPGEVLRLD</sequence>
<reference key="1">
    <citation type="journal article" date="2004" name="Nat. Biotechnol.">
        <title>The genome sequence of the extreme thermophile Thermus thermophilus.</title>
        <authorList>
            <person name="Henne A."/>
            <person name="Brueggemann H."/>
            <person name="Raasch C."/>
            <person name="Wiezer A."/>
            <person name="Hartsch T."/>
            <person name="Liesegang H."/>
            <person name="Johann A."/>
            <person name="Lienard T."/>
            <person name="Gohl O."/>
            <person name="Martinez-Arias R."/>
            <person name="Jacobi C."/>
            <person name="Starkuviene V."/>
            <person name="Schlenczeck S."/>
            <person name="Dencker S."/>
            <person name="Huber R."/>
            <person name="Klenk H.-P."/>
            <person name="Kramer W."/>
            <person name="Merkl R."/>
            <person name="Gottschalk G."/>
            <person name="Fritz H.-J."/>
        </authorList>
    </citation>
    <scope>NUCLEOTIDE SEQUENCE [LARGE SCALE GENOMIC DNA]</scope>
    <source>
        <strain>ATCC BAA-163 / DSM 7039 / HB27</strain>
    </source>
</reference>